<organismHost>
    <name type="scientific">Acanthamoeba polyphaga</name>
    <name type="common">Amoeba</name>
    <dbReference type="NCBI Taxonomy" id="5757"/>
</organismHost>
<keyword id="KW-1185">Reference proteome</keyword>
<feature type="chain" id="PRO_0000250623" description="Uncharacterized protein R133">
    <location>
        <begin position="1"/>
        <end position="127"/>
    </location>
</feature>
<gene>
    <name type="ordered locus">MIMI_R133</name>
</gene>
<accession>Q5UPL4</accession>
<dbReference type="EMBL" id="AY653733">
    <property type="protein sequence ID" value="AAV50408.1"/>
    <property type="molecule type" value="Genomic_DNA"/>
</dbReference>
<dbReference type="SMR" id="Q5UPL4"/>
<dbReference type="KEGG" id="vg:9924733"/>
<dbReference type="OrthoDB" id="38597at10239"/>
<dbReference type="Proteomes" id="UP000001134">
    <property type="component" value="Genome"/>
</dbReference>
<reference key="1">
    <citation type="journal article" date="2004" name="Science">
        <title>The 1.2-megabase genome sequence of Mimivirus.</title>
        <authorList>
            <person name="Raoult D."/>
            <person name="Audic S."/>
            <person name="Robert C."/>
            <person name="Abergel C."/>
            <person name="Renesto P."/>
            <person name="Ogata H."/>
            <person name="La Scola B."/>
            <person name="Susan M."/>
            <person name="Claverie J.-M."/>
        </authorList>
    </citation>
    <scope>NUCLEOTIDE SEQUENCE [LARGE SCALE GENOMIC DNA]</scope>
    <source>
        <strain>Rowbotham-Bradford</strain>
    </source>
</reference>
<protein>
    <recommendedName>
        <fullName>Uncharacterized protein R133</fullName>
    </recommendedName>
</protein>
<name>YR133_MIMIV</name>
<proteinExistence type="predicted"/>
<sequence length="127" mass="15223">MSKILKQLEKPVLDFISEKYNRKIIPNRYDLDDFIDNYISDKDEFQEIDECELDKYCENLYVQLESEGKIYKVGNKKSYIDIVQKKDYISCSEHQMVKAIKNHKRTDCKIVFRDTEFEVDSSGRYII</sequence>
<organism>
    <name type="scientific">Acanthamoeba polyphaga mimivirus</name>
    <name type="common">APMV</name>
    <dbReference type="NCBI Taxonomy" id="212035"/>
    <lineage>
        <taxon>Viruses</taxon>
        <taxon>Varidnaviria</taxon>
        <taxon>Bamfordvirae</taxon>
        <taxon>Nucleocytoviricota</taxon>
        <taxon>Megaviricetes</taxon>
        <taxon>Imitervirales</taxon>
        <taxon>Mimiviridae</taxon>
        <taxon>Megamimivirinae</taxon>
        <taxon>Mimivirus</taxon>
        <taxon>Mimivirus bradfordmassiliense</taxon>
    </lineage>
</organism>